<comment type="function">
    <text evidence="1">Involved in mRNA degradation. Catalyzes the phosphorolysis of single-stranded polyribonucleotides processively in the 3'- to 5'-direction.</text>
</comment>
<comment type="catalytic activity">
    <reaction evidence="1">
        <text>RNA(n+1) + phosphate = RNA(n) + a ribonucleoside 5'-diphosphate</text>
        <dbReference type="Rhea" id="RHEA:22096"/>
        <dbReference type="Rhea" id="RHEA-COMP:14527"/>
        <dbReference type="Rhea" id="RHEA-COMP:17342"/>
        <dbReference type="ChEBI" id="CHEBI:43474"/>
        <dbReference type="ChEBI" id="CHEBI:57930"/>
        <dbReference type="ChEBI" id="CHEBI:140395"/>
        <dbReference type="EC" id="2.7.7.8"/>
    </reaction>
</comment>
<comment type="cofactor">
    <cofactor evidence="1">
        <name>Mg(2+)</name>
        <dbReference type="ChEBI" id="CHEBI:18420"/>
    </cofactor>
</comment>
<comment type="subcellular location">
    <subcellularLocation>
        <location evidence="1">Cytoplasm</location>
    </subcellularLocation>
</comment>
<comment type="similarity">
    <text evidence="1">Belongs to the polyribonucleotide nucleotidyltransferase family.</text>
</comment>
<sequence>MFIKKEIDLGQGKVITIETGKMAKQADGSAVVRLNDTMVLATVVSSKTPPPPSQDFFPLQVEYREKYSAAGKFPGGFFKREGRPSEKEILSARLIDRALRPLFPDGYYQETQIIISVISSDTINDADVLGGIAASAAIMVSDIPFANPMSEVRVGRINGQFIVNPDTEELQRSDLDICIGGTEDTICMLEGEMKEISEAEMLDAIKFGHEAIKKLCAFQKELAAEVAKPKRAFAPTVAPAELVAFIEANCAAELKALAYTPLAKEERSDRTKAIYKETIAKTLEHFSSITAEEIAANPEKALCQSEHMIDECIHDVEKKVMRHMILDDSKRLDGRTLEQVRPISIELGLIPRAHGSALFTRGETQALVTLTLGTKKDAQSVDTLTDDKDKRFMLHYNFPPFSVGETGRVGGTGRREIGHGNLAERAIKMVMPAEQEFPYTVRLVSDILESNGSSSMASVCGGTLAAMDGGIPLKKPVSGIAMGLIKEGDRYAVLSDILGNEDHLGDMDFKVSGTRDGITACQMDIKIDGLDYHILETALEQARKGRLHILDVMTEAIPESREDIGKYAPRLTSIQIPVDAIGMVIGKGGETIRSITEETGAEINIDDDGTVTIACSSPEGTKAAVETIKTLVSKPEVGTIYMGKVRDIRDELGAFVEFLPKTDGLVHISEIARERIAKVSDVLKPGERVKVKLIDIRKDPRTGKTKFALSIKALLDTDQPAETNGEAKPARD</sequence>
<feature type="chain" id="PRO_1000147900" description="Polyribonucleotide nucleotidyltransferase">
    <location>
        <begin position="1"/>
        <end position="732"/>
    </location>
</feature>
<feature type="domain" description="KH" evidence="1">
    <location>
        <begin position="569"/>
        <end position="628"/>
    </location>
</feature>
<feature type="domain" description="S1 motif" evidence="1">
    <location>
        <begin position="638"/>
        <end position="712"/>
    </location>
</feature>
<feature type="binding site" evidence="1">
    <location>
        <position position="502"/>
    </location>
    <ligand>
        <name>Mg(2+)</name>
        <dbReference type="ChEBI" id="CHEBI:18420"/>
    </ligand>
</feature>
<feature type="binding site" evidence="1">
    <location>
        <position position="508"/>
    </location>
    <ligand>
        <name>Mg(2+)</name>
        <dbReference type="ChEBI" id="CHEBI:18420"/>
    </ligand>
</feature>
<proteinExistence type="inferred from homology"/>
<reference key="1">
    <citation type="submission" date="2008-06" db="EMBL/GenBank/DDBJ databases">
        <title>Complete sequence of Chlorobaculum parvum NCIB 8327.</title>
        <authorList>
            <consortium name="US DOE Joint Genome Institute"/>
            <person name="Lucas S."/>
            <person name="Copeland A."/>
            <person name="Lapidus A."/>
            <person name="Glavina del Rio T."/>
            <person name="Dalin E."/>
            <person name="Tice H."/>
            <person name="Bruce D."/>
            <person name="Goodwin L."/>
            <person name="Pitluck S."/>
            <person name="Schmutz J."/>
            <person name="Larimer F."/>
            <person name="Land M."/>
            <person name="Hauser L."/>
            <person name="Kyrpides N."/>
            <person name="Mikhailova N."/>
            <person name="Zhao F."/>
            <person name="Li T."/>
            <person name="Liu Z."/>
            <person name="Overmann J."/>
            <person name="Bryant D.A."/>
            <person name="Richardson P."/>
        </authorList>
    </citation>
    <scope>NUCLEOTIDE SEQUENCE [LARGE SCALE GENOMIC DNA]</scope>
    <source>
        <strain>DSM 263 / NCIMB 8327</strain>
    </source>
</reference>
<dbReference type="EC" id="2.7.7.8" evidence="1"/>
<dbReference type="EMBL" id="CP001099">
    <property type="protein sequence ID" value="ACF10962.1"/>
    <property type="molecule type" value="Genomic_DNA"/>
</dbReference>
<dbReference type="RefSeq" id="WP_012501795.1">
    <property type="nucleotide sequence ID" value="NC_011027.1"/>
</dbReference>
<dbReference type="SMR" id="B3QM09"/>
<dbReference type="STRING" id="517417.Cpar_0540"/>
<dbReference type="KEGG" id="cpc:Cpar_0540"/>
<dbReference type="eggNOG" id="COG1185">
    <property type="taxonomic scope" value="Bacteria"/>
</dbReference>
<dbReference type="HOGENOM" id="CLU_004217_2_2_10"/>
<dbReference type="OrthoDB" id="9804305at2"/>
<dbReference type="Proteomes" id="UP000008811">
    <property type="component" value="Chromosome"/>
</dbReference>
<dbReference type="GO" id="GO:0005829">
    <property type="term" value="C:cytosol"/>
    <property type="evidence" value="ECO:0007669"/>
    <property type="project" value="TreeGrafter"/>
</dbReference>
<dbReference type="GO" id="GO:0000175">
    <property type="term" value="F:3'-5'-RNA exonuclease activity"/>
    <property type="evidence" value="ECO:0007669"/>
    <property type="project" value="TreeGrafter"/>
</dbReference>
<dbReference type="GO" id="GO:0000287">
    <property type="term" value="F:magnesium ion binding"/>
    <property type="evidence" value="ECO:0007669"/>
    <property type="project" value="UniProtKB-UniRule"/>
</dbReference>
<dbReference type="GO" id="GO:0004654">
    <property type="term" value="F:polyribonucleotide nucleotidyltransferase activity"/>
    <property type="evidence" value="ECO:0007669"/>
    <property type="project" value="UniProtKB-UniRule"/>
</dbReference>
<dbReference type="GO" id="GO:0003723">
    <property type="term" value="F:RNA binding"/>
    <property type="evidence" value="ECO:0007669"/>
    <property type="project" value="UniProtKB-UniRule"/>
</dbReference>
<dbReference type="GO" id="GO:0006402">
    <property type="term" value="P:mRNA catabolic process"/>
    <property type="evidence" value="ECO:0007669"/>
    <property type="project" value="UniProtKB-UniRule"/>
</dbReference>
<dbReference type="GO" id="GO:0006396">
    <property type="term" value="P:RNA processing"/>
    <property type="evidence" value="ECO:0007669"/>
    <property type="project" value="InterPro"/>
</dbReference>
<dbReference type="CDD" id="cd02393">
    <property type="entry name" value="KH-I_PNPase"/>
    <property type="match status" value="1"/>
</dbReference>
<dbReference type="CDD" id="cd11363">
    <property type="entry name" value="RNase_PH_PNPase_1"/>
    <property type="match status" value="1"/>
</dbReference>
<dbReference type="CDD" id="cd11364">
    <property type="entry name" value="RNase_PH_PNPase_2"/>
    <property type="match status" value="1"/>
</dbReference>
<dbReference type="CDD" id="cd04472">
    <property type="entry name" value="S1_PNPase"/>
    <property type="match status" value="1"/>
</dbReference>
<dbReference type="FunFam" id="3.30.1370.10:FF:000001">
    <property type="entry name" value="Polyribonucleotide nucleotidyltransferase"/>
    <property type="match status" value="1"/>
</dbReference>
<dbReference type="FunFam" id="3.30.230.70:FF:000001">
    <property type="entry name" value="Polyribonucleotide nucleotidyltransferase"/>
    <property type="match status" value="1"/>
</dbReference>
<dbReference type="FunFam" id="3.30.230.70:FF:000002">
    <property type="entry name" value="Polyribonucleotide nucleotidyltransferase"/>
    <property type="match status" value="1"/>
</dbReference>
<dbReference type="Gene3D" id="3.30.230.70">
    <property type="entry name" value="GHMP Kinase, N-terminal domain"/>
    <property type="match status" value="2"/>
</dbReference>
<dbReference type="Gene3D" id="3.30.1370.10">
    <property type="entry name" value="K Homology domain, type 1"/>
    <property type="match status" value="1"/>
</dbReference>
<dbReference type="Gene3D" id="2.40.50.140">
    <property type="entry name" value="Nucleic acid-binding proteins"/>
    <property type="match status" value="1"/>
</dbReference>
<dbReference type="HAMAP" id="MF_01595">
    <property type="entry name" value="PNPase"/>
    <property type="match status" value="1"/>
</dbReference>
<dbReference type="InterPro" id="IPR001247">
    <property type="entry name" value="ExoRNase_PH_dom1"/>
</dbReference>
<dbReference type="InterPro" id="IPR015847">
    <property type="entry name" value="ExoRNase_PH_dom2"/>
</dbReference>
<dbReference type="InterPro" id="IPR036345">
    <property type="entry name" value="ExoRNase_PH_dom2_sf"/>
</dbReference>
<dbReference type="InterPro" id="IPR004087">
    <property type="entry name" value="KH_dom"/>
</dbReference>
<dbReference type="InterPro" id="IPR004088">
    <property type="entry name" value="KH_dom_type_1"/>
</dbReference>
<dbReference type="InterPro" id="IPR036612">
    <property type="entry name" value="KH_dom_type_1_sf"/>
</dbReference>
<dbReference type="InterPro" id="IPR012340">
    <property type="entry name" value="NA-bd_OB-fold"/>
</dbReference>
<dbReference type="InterPro" id="IPR012162">
    <property type="entry name" value="PNPase"/>
</dbReference>
<dbReference type="InterPro" id="IPR027408">
    <property type="entry name" value="PNPase/RNase_PH_dom_sf"/>
</dbReference>
<dbReference type="InterPro" id="IPR015848">
    <property type="entry name" value="PNPase_PH_RNA-bd_bac/org-type"/>
</dbReference>
<dbReference type="InterPro" id="IPR020568">
    <property type="entry name" value="Ribosomal_Su5_D2-typ_SF"/>
</dbReference>
<dbReference type="InterPro" id="IPR003029">
    <property type="entry name" value="S1_domain"/>
</dbReference>
<dbReference type="NCBIfam" id="TIGR03591">
    <property type="entry name" value="polynuc_phos"/>
    <property type="match status" value="1"/>
</dbReference>
<dbReference type="NCBIfam" id="NF008805">
    <property type="entry name" value="PRK11824.1"/>
    <property type="match status" value="1"/>
</dbReference>
<dbReference type="PANTHER" id="PTHR11252">
    <property type="entry name" value="POLYRIBONUCLEOTIDE NUCLEOTIDYLTRANSFERASE"/>
    <property type="match status" value="1"/>
</dbReference>
<dbReference type="PANTHER" id="PTHR11252:SF0">
    <property type="entry name" value="POLYRIBONUCLEOTIDE NUCLEOTIDYLTRANSFERASE 1, MITOCHONDRIAL"/>
    <property type="match status" value="1"/>
</dbReference>
<dbReference type="Pfam" id="PF00013">
    <property type="entry name" value="KH_1"/>
    <property type="match status" value="1"/>
</dbReference>
<dbReference type="Pfam" id="PF03726">
    <property type="entry name" value="PNPase"/>
    <property type="match status" value="1"/>
</dbReference>
<dbReference type="Pfam" id="PF01138">
    <property type="entry name" value="RNase_PH"/>
    <property type="match status" value="2"/>
</dbReference>
<dbReference type="Pfam" id="PF03725">
    <property type="entry name" value="RNase_PH_C"/>
    <property type="match status" value="2"/>
</dbReference>
<dbReference type="Pfam" id="PF00575">
    <property type="entry name" value="S1"/>
    <property type="match status" value="1"/>
</dbReference>
<dbReference type="PIRSF" id="PIRSF005499">
    <property type="entry name" value="PNPase"/>
    <property type="match status" value="1"/>
</dbReference>
<dbReference type="SMART" id="SM00322">
    <property type="entry name" value="KH"/>
    <property type="match status" value="1"/>
</dbReference>
<dbReference type="SMART" id="SM00316">
    <property type="entry name" value="S1"/>
    <property type="match status" value="1"/>
</dbReference>
<dbReference type="SUPFAM" id="SSF54791">
    <property type="entry name" value="Eukaryotic type KH-domain (KH-domain type I)"/>
    <property type="match status" value="1"/>
</dbReference>
<dbReference type="SUPFAM" id="SSF50249">
    <property type="entry name" value="Nucleic acid-binding proteins"/>
    <property type="match status" value="1"/>
</dbReference>
<dbReference type="SUPFAM" id="SSF55666">
    <property type="entry name" value="Ribonuclease PH domain 2-like"/>
    <property type="match status" value="2"/>
</dbReference>
<dbReference type="SUPFAM" id="SSF54211">
    <property type="entry name" value="Ribosomal protein S5 domain 2-like"/>
    <property type="match status" value="2"/>
</dbReference>
<dbReference type="PROSITE" id="PS50084">
    <property type="entry name" value="KH_TYPE_1"/>
    <property type="match status" value="1"/>
</dbReference>
<dbReference type="PROSITE" id="PS50126">
    <property type="entry name" value="S1"/>
    <property type="match status" value="1"/>
</dbReference>
<accession>B3QM09</accession>
<name>PNP_CHLP8</name>
<protein>
    <recommendedName>
        <fullName evidence="1">Polyribonucleotide nucleotidyltransferase</fullName>
        <ecNumber evidence="1">2.7.7.8</ecNumber>
    </recommendedName>
    <alternativeName>
        <fullName evidence="1">Polynucleotide phosphorylase</fullName>
        <shortName evidence="1">PNPase</shortName>
    </alternativeName>
</protein>
<evidence type="ECO:0000255" key="1">
    <source>
        <dbReference type="HAMAP-Rule" id="MF_01595"/>
    </source>
</evidence>
<keyword id="KW-0963">Cytoplasm</keyword>
<keyword id="KW-0460">Magnesium</keyword>
<keyword id="KW-0479">Metal-binding</keyword>
<keyword id="KW-0548">Nucleotidyltransferase</keyword>
<keyword id="KW-0694">RNA-binding</keyword>
<keyword id="KW-0808">Transferase</keyword>
<organism>
    <name type="scientific">Chlorobaculum parvum (strain DSM 263 / NCIMB 8327)</name>
    <name type="common">Chlorobium vibrioforme subsp. thiosulfatophilum</name>
    <dbReference type="NCBI Taxonomy" id="517417"/>
    <lineage>
        <taxon>Bacteria</taxon>
        <taxon>Pseudomonadati</taxon>
        <taxon>Chlorobiota</taxon>
        <taxon>Chlorobiia</taxon>
        <taxon>Chlorobiales</taxon>
        <taxon>Chlorobiaceae</taxon>
        <taxon>Chlorobaculum</taxon>
    </lineage>
</organism>
<gene>
    <name evidence="1" type="primary">pnp</name>
    <name type="ordered locus">Cpar_0540</name>
</gene>